<accession>A5GFQ5</accession>
<reference key="1">
    <citation type="submission" date="2007-05" db="EMBL/GenBank/DDBJ databases">
        <authorList>
            <consortium name="Porcine genome sequencing project"/>
        </authorList>
    </citation>
    <scope>NUCLEOTIDE SEQUENCE [LARGE SCALE GENOMIC DNA]</scope>
</reference>
<proteinExistence type="inferred from homology"/>
<protein>
    <recommendedName>
        <fullName>Protein canopy homolog 3</fullName>
    </recommendedName>
    <alternativeName>
        <fullName>Trinucleotide repeat-containing gene 5 protein</fullName>
    </alternativeName>
</protein>
<organism>
    <name type="scientific">Sus scrofa</name>
    <name type="common">Pig</name>
    <dbReference type="NCBI Taxonomy" id="9823"/>
    <lineage>
        <taxon>Eukaryota</taxon>
        <taxon>Metazoa</taxon>
        <taxon>Chordata</taxon>
        <taxon>Craniata</taxon>
        <taxon>Vertebrata</taxon>
        <taxon>Euteleostomi</taxon>
        <taxon>Mammalia</taxon>
        <taxon>Eutheria</taxon>
        <taxon>Laurasiatheria</taxon>
        <taxon>Artiodactyla</taxon>
        <taxon>Suina</taxon>
        <taxon>Suidae</taxon>
        <taxon>Sus</taxon>
    </lineage>
</organism>
<comment type="function">
    <text evidence="1">Toll-like receptor (TLR)-specific co-chaperone for HSP90B1. Required for proper TLR folding, except that of TLR3, and hence controls TLR exit from the endoplasmic reticulum. Consequently, required for both innate and adaptive immune responses (By similarity).</text>
</comment>
<comment type="subunit">
    <text evidence="1">Interacts with HSP90B1; this interaction is disrupted in the presence of ATP. Interacts with TLR1, TLR2, TLR4 and TLR9 (By similarity).</text>
</comment>
<comment type="subcellular location">
    <subcellularLocation>
        <location evidence="1">Endoplasmic reticulum</location>
    </subcellularLocation>
</comment>
<comment type="similarity">
    <text evidence="4">Belongs to the canopy family.</text>
</comment>
<dbReference type="EMBL" id="CR956379">
    <property type="protein sequence ID" value="CAN13167.1"/>
    <property type="molecule type" value="Genomic_DNA"/>
</dbReference>
<dbReference type="RefSeq" id="NP_001103898.1">
    <property type="nucleotide sequence ID" value="NM_001110428.1"/>
</dbReference>
<dbReference type="FunCoup" id="A5GFQ5">
    <property type="interactions" value="1041"/>
</dbReference>
<dbReference type="STRING" id="9823.ENSSSCP00000001789"/>
<dbReference type="GlyCosmos" id="A5GFQ5">
    <property type="glycosylation" value="1 site, No reported glycans"/>
</dbReference>
<dbReference type="GlyGen" id="A5GFQ5">
    <property type="glycosylation" value="1 site"/>
</dbReference>
<dbReference type="PaxDb" id="9823-ENSSSCP00000001789"/>
<dbReference type="PeptideAtlas" id="A5GFQ5"/>
<dbReference type="Ensembl" id="ENSSSCT00000001836.6">
    <property type="protein sequence ID" value="ENSSSCP00000001789.2"/>
    <property type="gene ID" value="ENSSSCG00000001651.6"/>
</dbReference>
<dbReference type="Ensembl" id="ENSSSCT00025060800.1">
    <property type="protein sequence ID" value="ENSSSCP00025025793.1"/>
    <property type="gene ID" value="ENSSSCG00025044824.1"/>
</dbReference>
<dbReference type="Ensembl" id="ENSSSCT00030086678.1">
    <property type="protein sequence ID" value="ENSSSCP00030039977.1"/>
    <property type="gene ID" value="ENSSSCG00030061968.1"/>
</dbReference>
<dbReference type="Ensembl" id="ENSSSCT00040055434.1">
    <property type="protein sequence ID" value="ENSSSCP00040023041.1"/>
    <property type="gene ID" value="ENSSSCG00040041282.1"/>
</dbReference>
<dbReference type="Ensembl" id="ENSSSCT00045011443.1">
    <property type="protein sequence ID" value="ENSSSCP00045007798.1"/>
    <property type="gene ID" value="ENSSSCG00045006843.1"/>
</dbReference>
<dbReference type="Ensembl" id="ENSSSCT00050005888.1">
    <property type="protein sequence ID" value="ENSSSCP00050002555.1"/>
    <property type="gene ID" value="ENSSSCG00050004271.1"/>
</dbReference>
<dbReference type="Ensembl" id="ENSSSCT00055033182.1">
    <property type="protein sequence ID" value="ENSSSCP00055026431.1"/>
    <property type="gene ID" value="ENSSSCG00055016837.1"/>
</dbReference>
<dbReference type="Ensembl" id="ENSSSCT00060084302.1">
    <property type="protein sequence ID" value="ENSSSCP00060036526.1"/>
    <property type="gene ID" value="ENSSSCG00060061785.1"/>
</dbReference>
<dbReference type="Ensembl" id="ENSSSCT00065109973.1">
    <property type="protein sequence ID" value="ENSSSCP00065049488.1"/>
    <property type="gene ID" value="ENSSSCG00065079136.1"/>
</dbReference>
<dbReference type="Ensembl" id="ENSSSCT00070000928.1">
    <property type="protein sequence ID" value="ENSSSCP00070000811.1"/>
    <property type="gene ID" value="ENSSSCG00070000496.1"/>
</dbReference>
<dbReference type="Ensembl" id="ENSSSCT00090019036">
    <property type="protein sequence ID" value="ENSSSCP00090011756"/>
    <property type="gene ID" value="ENSSSCG00090010811"/>
</dbReference>
<dbReference type="Ensembl" id="ENSSSCT00105006556">
    <property type="protein sequence ID" value="ENSSSCP00105004802"/>
    <property type="gene ID" value="ENSSSCG00105003263"/>
</dbReference>
<dbReference type="Ensembl" id="ENSSSCT00115016957">
    <property type="protein sequence ID" value="ENSSSCP00115016009"/>
    <property type="gene ID" value="ENSSSCG00115009811"/>
</dbReference>
<dbReference type="GeneID" id="100126290"/>
<dbReference type="KEGG" id="ssc:100126290"/>
<dbReference type="CTD" id="10695"/>
<dbReference type="VGNC" id="VGNC:86841">
    <property type="gene designation" value="CNPY3"/>
</dbReference>
<dbReference type="eggNOG" id="KOG4052">
    <property type="taxonomic scope" value="Eukaryota"/>
</dbReference>
<dbReference type="GeneTree" id="ENSGT00390000014072"/>
<dbReference type="HOGENOM" id="CLU_078068_0_0_1"/>
<dbReference type="InParanoid" id="A5GFQ5"/>
<dbReference type="OMA" id="GQDKACL"/>
<dbReference type="OrthoDB" id="6020060at2759"/>
<dbReference type="TreeFam" id="TF318951"/>
<dbReference type="Reactome" id="R-SSC-1679131">
    <property type="pathway name" value="Trafficking and processing of endosomal TLR"/>
</dbReference>
<dbReference type="Proteomes" id="UP000008227">
    <property type="component" value="Chromosome 7"/>
</dbReference>
<dbReference type="Proteomes" id="UP000314985">
    <property type="component" value="Chromosome 7"/>
</dbReference>
<dbReference type="Proteomes" id="UP000694570">
    <property type="component" value="Unplaced"/>
</dbReference>
<dbReference type="Proteomes" id="UP000694571">
    <property type="component" value="Unplaced"/>
</dbReference>
<dbReference type="Proteomes" id="UP000694720">
    <property type="component" value="Unplaced"/>
</dbReference>
<dbReference type="Proteomes" id="UP000694722">
    <property type="component" value="Unplaced"/>
</dbReference>
<dbReference type="Proteomes" id="UP000694723">
    <property type="component" value="Unplaced"/>
</dbReference>
<dbReference type="Proteomes" id="UP000694724">
    <property type="component" value="Unplaced"/>
</dbReference>
<dbReference type="Proteomes" id="UP000694725">
    <property type="component" value="Unplaced"/>
</dbReference>
<dbReference type="Proteomes" id="UP000694726">
    <property type="component" value="Unplaced"/>
</dbReference>
<dbReference type="Proteomes" id="UP000694727">
    <property type="component" value="Unplaced"/>
</dbReference>
<dbReference type="Proteomes" id="UP000694728">
    <property type="component" value="Unplaced"/>
</dbReference>
<dbReference type="Bgee" id="ENSSSCG00000001651">
    <property type="expression patterns" value="Expressed in right lobe of liver and 43 other cell types or tissues"/>
</dbReference>
<dbReference type="ExpressionAtlas" id="A5GFQ5">
    <property type="expression patterns" value="baseline and differential"/>
</dbReference>
<dbReference type="GO" id="GO:0005783">
    <property type="term" value="C:endoplasmic reticulum"/>
    <property type="evidence" value="ECO:0007669"/>
    <property type="project" value="UniProtKB-SubCell"/>
</dbReference>
<dbReference type="GO" id="GO:0005102">
    <property type="term" value="F:signaling receptor binding"/>
    <property type="evidence" value="ECO:0000318"/>
    <property type="project" value="GO_Central"/>
</dbReference>
<dbReference type="GO" id="GO:0045087">
    <property type="term" value="P:innate immune response"/>
    <property type="evidence" value="ECO:0007669"/>
    <property type="project" value="UniProtKB-KW"/>
</dbReference>
<dbReference type="InterPro" id="IPR021852">
    <property type="entry name" value="DUF3456"/>
</dbReference>
<dbReference type="PANTHER" id="PTHR15382">
    <property type="entry name" value="CTG4A-RELATED"/>
    <property type="match status" value="1"/>
</dbReference>
<dbReference type="PANTHER" id="PTHR15382:SF2">
    <property type="entry name" value="PROTEIN CANOPY HOMOLOG 3"/>
    <property type="match status" value="1"/>
</dbReference>
<dbReference type="Pfam" id="PF11938">
    <property type="entry name" value="DUF3456"/>
    <property type="match status" value="1"/>
</dbReference>
<gene>
    <name type="primary">CNPY3</name>
    <name type="synonym">TNRC5</name>
</gene>
<evidence type="ECO:0000250" key="1"/>
<evidence type="ECO:0000255" key="2"/>
<evidence type="ECO:0000256" key="3">
    <source>
        <dbReference type="SAM" id="MobiDB-lite"/>
    </source>
</evidence>
<evidence type="ECO:0000305" key="4"/>
<sequence>MEPLPEPTSRPRLRPRPRCLLLLPLLLLLLLLLPAPELGPREARAEETDWVRLPSKCEVCKYVAVELKSAFEETGKTKEVIDTGYGILDRKASGVKYTKSDLRLIEVTETICKRLLDYSLHKERTGSNRFAKGMSETFETLHNLVHKGVKVVMDIPYELWNETSAEVADLKKQCDVLVEEFEEVIEDWYRNHQEEDLTQFLCANHVLKGKDTSCLAEQWSGKKGDTAALGGKKSKKKSSRAKASGGGSKQRKELGGIEGDPSPEEDEGIQKASPLTHSPPDEL</sequence>
<feature type="signal peptide" evidence="2">
    <location>
        <begin position="1"/>
        <end position="35"/>
    </location>
</feature>
<feature type="chain" id="PRO_0000313782" description="Protein canopy homolog 3">
    <location>
        <begin position="36"/>
        <end position="283"/>
    </location>
</feature>
<feature type="domain" description="Saposin B-type">
    <location>
        <begin position="55"/>
        <end position="276"/>
    </location>
</feature>
<feature type="region of interest" description="Disordered" evidence="3">
    <location>
        <begin position="223"/>
        <end position="283"/>
    </location>
</feature>
<feature type="coiled-coil region" evidence="2">
    <location>
        <begin position="161"/>
        <end position="187"/>
    </location>
</feature>
<feature type="glycosylation site" description="N-linked (GlcNAc...) asparagine" evidence="2">
    <location>
        <position position="161"/>
    </location>
</feature>
<name>CNPY3_PIG</name>
<keyword id="KW-0143">Chaperone</keyword>
<keyword id="KW-0175">Coiled coil</keyword>
<keyword id="KW-0256">Endoplasmic reticulum</keyword>
<keyword id="KW-0325">Glycoprotein</keyword>
<keyword id="KW-0391">Immunity</keyword>
<keyword id="KW-0399">Innate immunity</keyword>
<keyword id="KW-1185">Reference proteome</keyword>
<keyword id="KW-0732">Signal</keyword>